<accession>Q1C7S6</accession>
<sequence>MSELCPCGSILNYHECCGPYILGTQVAAKPAILMRSRYCAYVEKNVDYLIATWHPDCHAQEWRESIIQGFTKTVWHGLTVIAETPGRHPDEAFVEFIARFTDADNAQITAMHERSRFLRIKEHWYYIDGIRPSLGRNDTCLCGSGKKHKKCCGR</sequence>
<organism>
    <name type="scientific">Yersinia pestis bv. Antiqua (strain Antiqua)</name>
    <dbReference type="NCBI Taxonomy" id="360102"/>
    <lineage>
        <taxon>Bacteria</taxon>
        <taxon>Pseudomonadati</taxon>
        <taxon>Pseudomonadota</taxon>
        <taxon>Gammaproteobacteria</taxon>
        <taxon>Enterobacterales</taxon>
        <taxon>Yersiniaceae</taxon>
        <taxon>Yersinia</taxon>
    </lineage>
</organism>
<gene>
    <name type="ordered locus">YPA_1530</name>
</gene>
<dbReference type="EMBL" id="CP000308">
    <property type="protein sequence ID" value="ABG13496.1"/>
    <property type="molecule type" value="Genomic_DNA"/>
</dbReference>
<dbReference type="RefSeq" id="WP_002210666.1">
    <property type="nucleotide sequence ID" value="NZ_CP009906.1"/>
</dbReference>
<dbReference type="SMR" id="Q1C7S6"/>
<dbReference type="KEGG" id="ypa:YPA_1530"/>
<dbReference type="Proteomes" id="UP000001971">
    <property type="component" value="Chromosome"/>
</dbReference>
<dbReference type="Gene3D" id="3.10.450.50">
    <property type="match status" value="1"/>
</dbReference>
<dbReference type="HAMAP" id="MF_00612">
    <property type="entry name" value="UPF0225"/>
    <property type="match status" value="1"/>
</dbReference>
<dbReference type="InterPro" id="IPR032710">
    <property type="entry name" value="NTF2-like_dom_sf"/>
</dbReference>
<dbReference type="InterPro" id="IPR004027">
    <property type="entry name" value="SEC_C_motif"/>
</dbReference>
<dbReference type="InterPro" id="IPR023006">
    <property type="entry name" value="UPF0225"/>
</dbReference>
<dbReference type="InterPro" id="IPR048469">
    <property type="entry name" value="YchJ-like_M"/>
</dbReference>
<dbReference type="NCBIfam" id="NF002449">
    <property type="entry name" value="PRK01617.1"/>
    <property type="match status" value="1"/>
</dbReference>
<dbReference type="NCBIfam" id="NF002486">
    <property type="entry name" value="PRK01752.1"/>
    <property type="match status" value="1"/>
</dbReference>
<dbReference type="PANTHER" id="PTHR33747:SF1">
    <property type="entry name" value="ADENYLATE CYCLASE-ASSOCIATED CAP C-TERMINAL DOMAIN-CONTAINING PROTEIN"/>
    <property type="match status" value="1"/>
</dbReference>
<dbReference type="PANTHER" id="PTHR33747">
    <property type="entry name" value="UPF0225 PROTEIN SCO1677"/>
    <property type="match status" value="1"/>
</dbReference>
<dbReference type="Pfam" id="PF02810">
    <property type="entry name" value="SEC-C"/>
    <property type="match status" value="2"/>
</dbReference>
<dbReference type="Pfam" id="PF17775">
    <property type="entry name" value="YchJ_M-like"/>
    <property type="match status" value="1"/>
</dbReference>
<dbReference type="SUPFAM" id="SSF54427">
    <property type="entry name" value="NTF2-like"/>
    <property type="match status" value="1"/>
</dbReference>
<dbReference type="SUPFAM" id="SSF103642">
    <property type="entry name" value="Sec-C motif"/>
    <property type="match status" value="1"/>
</dbReference>
<feature type="chain" id="PRO_1000056750" description="UPF0225 protein YPA_1530">
    <location>
        <begin position="1"/>
        <end position="154"/>
    </location>
</feature>
<evidence type="ECO:0000255" key="1">
    <source>
        <dbReference type="HAMAP-Rule" id="MF_00612"/>
    </source>
</evidence>
<proteinExistence type="inferred from homology"/>
<reference key="1">
    <citation type="journal article" date="2006" name="J. Bacteriol.">
        <title>Complete genome sequence of Yersinia pestis strains Antiqua and Nepal516: evidence of gene reduction in an emerging pathogen.</title>
        <authorList>
            <person name="Chain P.S.G."/>
            <person name="Hu P."/>
            <person name="Malfatti S.A."/>
            <person name="Radnedge L."/>
            <person name="Larimer F."/>
            <person name="Vergez L.M."/>
            <person name="Worsham P."/>
            <person name="Chu M.C."/>
            <person name="Andersen G.L."/>
        </authorList>
    </citation>
    <scope>NUCLEOTIDE SEQUENCE [LARGE SCALE GENOMIC DNA]</scope>
    <source>
        <strain>Antiqua</strain>
    </source>
</reference>
<protein>
    <recommendedName>
        <fullName evidence="1">UPF0225 protein YPA_1530</fullName>
    </recommendedName>
</protein>
<name>Y1530_YERPA</name>
<comment type="similarity">
    <text evidence="1">Belongs to the UPF0225 family.</text>
</comment>